<dbReference type="EMBL" id="CP001598">
    <property type="protein sequence ID" value="ACQ48229.1"/>
    <property type="molecule type" value="Genomic_DNA"/>
</dbReference>
<dbReference type="KEGG" id="bai:BAA_5060"/>
<dbReference type="HOGENOM" id="CLU_144811_6_0_9"/>
<dbReference type="GO" id="GO:0005886">
    <property type="term" value="C:plasma membrane"/>
    <property type="evidence" value="ECO:0007669"/>
    <property type="project" value="UniProtKB-SubCell"/>
</dbReference>
<dbReference type="HAMAP" id="MF_00386">
    <property type="entry name" value="UPF0161_YidD"/>
    <property type="match status" value="1"/>
</dbReference>
<dbReference type="InterPro" id="IPR002696">
    <property type="entry name" value="Membr_insert_effic_factor_YidD"/>
</dbReference>
<dbReference type="NCBIfam" id="TIGR00278">
    <property type="entry name" value="membrane protein insertion efficiency factor YidD"/>
    <property type="match status" value="1"/>
</dbReference>
<dbReference type="PANTHER" id="PTHR33383">
    <property type="entry name" value="MEMBRANE PROTEIN INSERTION EFFICIENCY FACTOR-RELATED"/>
    <property type="match status" value="1"/>
</dbReference>
<dbReference type="PANTHER" id="PTHR33383:SF1">
    <property type="entry name" value="MEMBRANE PROTEIN INSERTION EFFICIENCY FACTOR-RELATED"/>
    <property type="match status" value="1"/>
</dbReference>
<dbReference type="Pfam" id="PF01809">
    <property type="entry name" value="YidD"/>
    <property type="match status" value="1"/>
</dbReference>
<dbReference type="SMART" id="SM01234">
    <property type="entry name" value="Haemolytic"/>
    <property type="match status" value="1"/>
</dbReference>
<protein>
    <recommendedName>
        <fullName evidence="1">Putative membrane protein insertion efficiency factor</fullName>
    </recommendedName>
</protein>
<sequence>MKQIFIGIIRFYQKFISPMTPPTCRFYPTCSHYGLEAFQKHGAFKGFWLTCKRILKCHPFHPGGFDPVPDKKDDKVNS</sequence>
<gene>
    <name type="ordered locus">BAA_5060</name>
</gene>
<name>YIDD_BACAA</name>
<evidence type="ECO:0000255" key="1">
    <source>
        <dbReference type="HAMAP-Rule" id="MF_00386"/>
    </source>
</evidence>
<comment type="function">
    <text evidence="1">Could be involved in insertion of integral membrane proteins into the membrane.</text>
</comment>
<comment type="subcellular location">
    <subcellularLocation>
        <location evidence="1">Cell membrane</location>
        <topology evidence="1">Peripheral membrane protein</topology>
        <orientation evidence="1">Cytoplasmic side</orientation>
    </subcellularLocation>
</comment>
<comment type="similarity">
    <text evidence="1">Belongs to the UPF0161 family.</text>
</comment>
<proteinExistence type="inferred from homology"/>
<reference key="1">
    <citation type="submission" date="2009-04" db="EMBL/GenBank/DDBJ databases">
        <title>Genome sequence of Bacillus anthracis A0248.</title>
        <authorList>
            <person name="Dodson R.J."/>
            <person name="Munk A.C."/>
            <person name="Bruce D."/>
            <person name="Detter C."/>
            <person name="Tapia R."/>
            <person name="Sutton G."/>
            <person name="Sims D."/>
            <person name="Brettin T."/>
        </authorList>
    </citation>
    <scope>NUCLEOTIDE SEQUENCE [LARGE SCALE GENOMIC DNA]</scope>
    <source>
        <strain>A0248</strain>
    </source>
</reference>
<keyword id="KW-1003">Cell membrane</keyword>
<keyword id="KW-0472">Membrane</keyword>
<feature type="chain" id="PRO_1000197738" description="Putative membrane protein insertion efficiency factor">
    <location>
        <begin position="1"/>
        <end position="78"/>
    </location>
</feature>
<organism>
    <name type="scientific">Bacillus anthracis (strain A0248)</name>
    <dbReference type="NCBI Taxonomy" id="592021"/>
    <lineage>
        <taxon>Bacteria</taxon>
        <taxon>Bacillati</taxon>
        <taxon>Bacillota</taxon>
        <taxon>Bacilli</taxon>
        <taxon>Bacillales</taxon>
        <taxon>Bacillaceae</taxon>
        <taxon>Bacillus</taxon>
        <taxon>Bacillus cereus group</taxon>
    </lineage>
</organism>
<accession>C3PCE8</accession>